<accession>Q7MXI4</accession>
<keyword id="KW-0255">Endonuclease</keyword>
<keyword id="KW-0378">Hydrolase</keyword>
<keyword id="KW-0540">Nuclease</keyword>
<keyword id="KW-1185">Reference proteome</keyword>
<keyword id="KW-0694">RNA-binding</keyword>
<keyword id="KW-0819">tRNA processing</keyword>
<comment type="function">
    <text evidence="1">RNaseP catalyzes the removal of the 5'-leader sequence from pre-tRNA to produce the mature 5'-terminus. It can also cleave other RNA substrates such as 4.5S RNA. The protein component plays an auxiliary but essential role in vivo by binding to the 5'-leader sequence and broadening the substrate specificity of the ribozyme.</text>
</comment>
<comment type="catalytic activity">
    <reaction evidence="1">
        <text>Endonucleolytic cleavage of RNA, removing 5'-extranucleotides from tRNA precursor.</text>
        <dbReference type="EC" id="3.1.26.5"/>
    </reaction>
</comment>
<comment type="subunit">
    <text evidence="1">Consists of a catalytic RNA component (M1 or rnpB) and a protein subunit.</text>
</comment>
<comment type="similarity">
    <text evidence="1">Belongs to the RnpA family.</text>
</comment>
<gene>
    <name evidence="1" type="primary">rnpA</name>
    <name type="ordered locus">PG_0201</name>
</gene>
<reference key="1">
    <citation type="journal article" date="2003" name="J. Bacteriol.">
        <title>Complete genome sequence of the oral pathogenic bacterium Porphyromonas gingivalis strain W83.</title>
        <authorList>
            <person name="Nelson K.E."/>
            <person name="Fleischmann R.D."/>
            <person name="DeBoy R.T."/>
            <person name="Paulsen I.T."/>
            <person name="Fouts D.E."/>
            <person name="Eisen J.A."/>
            <person name="Daugherty S.C."/>
            <person name="Dodson R.J."/>
            <person name="Durkin A.S."/>
            <person name="Gwinn M.L."/>
            <person name="Haft D.H."/>
            <person name="Kolonay J.F."/>
            <person name="Nelson W.C."/>
            <person name="Mason T.M."/>
            <person name="Tallon L."/>
            <person name="Gray J."/>
            <person name="Granger D."/>
            <person name="Tettelin H."/>
            <person name="Dong H."/>
            <person name="Galvin J.L."/>
            <person name="Duncan M.J."/>
            <person name="Dewhirst F.E."/>
            <person name="Fraser C.M."/>
        </authorList>
    </citation>
    <scope>NUCLEOTIDE SEQUENCE [LARGE SCALE GENOMIC DNA]</scope>
    <source>
        <strain>ATCC BAA-308 / W83</strain>
    </source>
</reference>
<protein>
    <recommendedName>
        <fullName evidence="1">Ribonuclease P protein component</fullName>
        <shortName evidence="1">RNase P protein</shortName>
        <shortName evidence="1">RNaseP protein</shortName>
        <ecNumber evidence="1">3.1.26.5</ecNumber>
    </recommendedName>
    <alternativeName>
        <fullName evidence="1">Protein C5</fullName>
    </alternativeName>
</protein>
<proteinExistence type="inferred from homology"/>
<feature type="chain" id="PRO_0000198506" description="Ribonuclease P protein component">
    <location>
        <begin position="1"/>
        <end position="137"/>
    </location>
</feature>
<organism>
    <name type="scientific">Porphyromonas gingivalis (strain ATCC BAA-308 / W83)</name>
    <dbReference type="NCBI Taxonomy" id="242619"/>
    <lineage>
        <taxon>Bacteria</taxon>
        <taxon>Pseudomonadati</taxon>
        <taxon>Bacteroidota</taxon>
        <taxon>Bacteroidia</taxon>
        <taxon>Bacteroidales</taxon>
        <taxon>Porphyromonadaceae</taxon>
        <taxon>Porphyromonas</taxon>
    </lineage>
</organism>
<sequence>MTSPPTFGLSKSERLYLRDEINTVFGEGKAFVVYPLRVVYRLGSEHRVAYSSMLVSVAKKRFRRAVKRNRVKRLVREAYRLNKHLLNDVLQERQIYATIAFMVVSDELPDFRTVERAMQKSLIRIAGNVPSSALKNE</sequence>
<evidence type="ECO:0000255" key="1">
    <source>
        <dbReference type="HAMAP-Rule" id="MF_00227"/>
    </source>
</evidence>
<name>RNPA_PORGI</name>
<dbReference type="EC" id="3.1.26.5" evidence="1"/>
<dbReference type="EMBL" id="AE015924">
    <property type="protein sequence ID" value="AAQ65435.1"/>
    <property type="molecule type" value="Genomic_DNA"/>
</dbReference>
<dbReference type="RefSeq" id="WP_005874732.1">
    <property type="nucleotide sequence ID" value="NC_002950.2"/>
</dbReference>
<dbReference type="SMR" id="Q7MXI4"/>
<dbReference type="STRING" id="242619.PG_0201"/>
<dbReference type="EnsemblBacteria" id="AAQ65435">
    <property type="protein sequence ID" value="AAQ65435"/>
    <property type="gene ID" value="PG_0201"/>
</dbReference>
<dbReference type="KEGG" id="pgi:PG_0201"/>
<dbReference type="eggNOG" id="COG0594">
    <property type="taxonomic scope" value="Bacteria"/>
</dbReference>
<dbReference type="HOGENOM" id="CLU_117179_1_0_10"/>
<dbReference type="Proteomes" id="UP000000588">
    <property type="component" value="Chromosome"/>
</dbReference>
<dbReference type="GO" id="GO:0030677">
    <property type="term" value="C:ribonuclease P complex"/>
    <property type="evidence" value="ECO:0007669"/>
    <property type="project" value="TreeGrafter"/>
</dbReference>
<dbReference type="GO" id="GO:0042781">
    <property type="term" value="F:3'-tRNA processing endoribonuclease activity"/>
    <property type="evidence" value="ECO:0007669"/>
    <property type="project" value="TreeGrafter"/>
</dbReference>
<dbReference type="GO" id="GO:0004526">
    <property type="term" value="F:ribonuclease P activity"/>
    <property type="evidence" value="ECO:0007669"/>
    <property type="project" value="UniProtKB-UniRule"/>
</dbReference>
<dbReference type="GO" id="GO:0000049">
    <property type="term" value="F:tRNA binding"/>
    <property type="evidence" value="ECO:0007669"/>
    <property type="project" value="UniProtKB-UniRule"/>
</dbReference>
<dbReference type="GO" id="GO:0001682">
    <property type="term" value="P:tRNA 5'-leader removal"/>
    <property type="evidence" value="ECO:0007669"/>
    <property type="project" value="UniProtKB-UniRule"/>
</dbReference>
<dbReference type="Gene3D" id="3.30.230.10">
    <property type="match status" value="1"/>
</dbReference>
<dbReference type="HAMAP" id="MF_00227">
    <property type="entry name" value="RNase_P"/>
    <property type="match status" value="1"/>
</dbReference>
<dbReference type="InterPro" id="IPR020568">
    <property type="entry name" value="Ribosomal_Su5_D2-typ_SF"/>
</dbReference>
<dbReference type="InterPro" id="IPR014721">
    <property type="entry name" value="Ribsml_uS5_D2-typ_fold_subgr"/>
</dbReference>
<dbReference type="InterPro" id="IPR000100">
    <property type="entry name" value="RNase_P"/>
</dbReference>
<dbReference type="InterPro" id="IPR020539">
    <property type="entry name" value="RNase_P_CS"/>
</dbReference>
<dbReference type="NCBIfam" id="TIGR00188">
    <property type="entry name" value="rnpA"/>
    <property type="match status" value="1"/>
</dbReference>
<dbReference type="PANTHER" id="PTHR33992">
    <property type="entry name" value="RIBONUCLEASE P PROTEIN COMPONENT"/>
    <property type="match status" value="1"/>
</dbReference>
<dbReference type="PANTHER" id="PTHR33992:SF1">
    <property type="entry name" value="RIBONUCLEASE P PROTEIN COMPONENT"/>
    <property type="match status" value="1"/>
</dbReference>
<dbReference type="Pfam" id="PF00825">
    <property type="entry name" value="Ribonuclease_P"/>
    <property type="match status" value="1"/>
</dbReference>
<dbReference type="SUPFAM" id="SSF54211">
    <property type="entry name" value="Ribosomal protein S5 domain 2-like"/>
    <property type="match status" value="1"/>
</dbReference>
<dbReference type="PROSITE" id="PS00648">
    <property type="entry name" value="RIBONUCLEASE_P"/>
    <property type="match status" value="1"/>
</dbReference>